<protein>
    <recommendedName>
        <fullName evidence="1">ATP synthase subunit beta</fullName>
        <ecNumber evidence="1">7.1.2.2</ecNumber>
    </recommendedName>
    <alternativeName>
        <fullName evidence="1">ATP synthase F1 sector subunit beta</fullName>
    </alternativeName>
    <alternativeName>
        <fullName evidence="1">F-ATPase subunit beta</fullName>
    </alternativeName>
</protein>
<organism>
    <name type="scientific">Shewanella denitrificans (strain OS217 / ATCC BAA-1090 / DSM 15013)</name>
    <dbReference type="NCBI Taxonomy" id="318161"/>
    <lineage>
        <taxon>Bacteria</taxon>
        <taxon>Pseudomonadati</taxon>
        <taxon>Pseudomonadota</taxon>
        <taxon>Gammaproteobacteria</taxon>
        <taxon>Alteromonadales</taxon>
        <taxon>Shewanellaceae</taxon>
        <taxon>Shewanella</taxon>
    </lineage>
</organism>
<evidence type="ECO:0000255" key="1">
    <source>
        <dbReference type="HAMAP-Rule" id="MF_01347"/>
    </source>
</evidence>
<keyword id="KW-0066">ATP synthesis</keyword>
<keyword id="KW-0067">ATP-binding</keyword>
<keyword id="KW-0997">Cell inner membrane</keyword>
<keyword id="KW-1003">Cell membrane</keyword>
<keyword id="KW-0139">CF(1)</keyword>
<keyword id="KW-0375">Hydrogen ion transport</keyword>
<keyword id="KW-0406">Ion transport</keyword>
<keyword id="KW-0472">Membrane</keyword>
<keyword id="KW-0547">Nucleotide-binding</keyword>
<keyword id="KW-1185">Reference proteome</keyword>
<keyword id="KW-1278">Translocase</keyword>
<keyword id="KW-0813">Transport</keyword>
<feature type="chain" id="PRO_1000055161" description="ATP synthase subunit beta">
    <location>
        <begin position="1"/>
        <end position="463"/>
    </location>
</feature>
<feature type="binding site" evidence="1">
    <location>
        <begin position="152"/>
        <end position="159"/>
    </location>
    <ligand>
        <name>ATP</name>
        <dbReference type="ChEBI" id="CHEBI:30616"/>
    </ligand>
</feature>
<proteinExistence type="inferred from homology"/>
<reference key="1">
    <citation type="submission" date="2006-03" db="EMBL/GenBank/DDBJ databases">
        <title>Complete sequence of Shewanella denitrificans OS217.</title>
        <authorList>
            <consortium name="US DOE Joint Genome Institute"/>
            <person name="Copeland A."/>
            <person name="Lucas S."/>
            <person name="Lapidus A."/>
            <person name="Barry K."/>
            <person name="Detter J.C."/>
            <person name="Glavina del Rio T."/>
            <person name="Hammon N."/>
            <person name="Israni S."/>
            <person name="Dalin E."/>
            <person name="Tice H."/>
            <person name="Pitluck S."/>
            <person name="Brettin T."/>
            <person name="Bruce D."/>
            <person name="Han C."/>
            <person name="Tapia R."/>
            <person name="Gilna P."/>
            <person name="Kiss H."/>
            <person name="Schmutz J."/>
            <person name="Larimer F."/>
            <person name="Land M."/>
            <person name="Hauser L."/>
            <person name="Kyrpides N."/>
            <person name="Lykidis A."/>
            <person name="Richardson P."/>
        </authorList>
    </citation>
    <scope>NUCLEOTIDE SEQUENCE [LARGE SCALE GENOMIC DNA]</scope>
    <source>
        <strain>OS217 / ATCC BAA-1090 / DSM 15013</strain>
    </source>
</reference>
<dbReference type="EC" id="7.1.2.2" evidence="1"/>
<dbReference type="EMBL" id="CP000302">
    <property type="protein sequence ID" value="ABE57025.1"/>
    <property type="molecule type" value="Genomic_DNA"/>
</dbReference>
<dbReference type="RefSeq" id="WP_011498163.1">
    <property type="nucleotide sequence ID" value="NC_007954.1"/>
</dbReference>
<dbReference type="SMR" id="Q12HQ1"/>
<dbReference type="STRING" id="318161.Sden_3752"/>
<dbReference type="KEGG" id="sdn:Sden_3752"/>
<dbReference type="eggNOG" id="COG0055">
    <property type="taxonomic scope" value="Bacteria"/>
</dbReference>
<dbReference type="HOGENOM" id="CLU_022398_0_2_6"/>
<dbReference type="OrthoDB" id="9801639at2"/>
<dbReference type="Proteomes" id="UP000001982">
    <property type="component" value="Chromosome"/>
</dbReference>
<dbReference type="GO" id="GO:0005886">
    <property type="term" value="C:plasma membrane"/>
    <property type="evidence" value="ECO:0007669"/>
    <property type="project" value="UniProtKB-SubCell"/>
</dbReference>
<dbReference type="GO" id="GO:0045259">
    <property type="term" value="C:proton-transporting ATP synthase complex"/>
    <property type="evidence" value="ECO:0007669"/>
    <property type="project" value="UniProtKB-KW"/>
</dbReference>
<dbReference type="GO" id="GO:0005524">
    <property type="term" value="F:ATP binding"/>
    <property type="evidence" value="ECO:0007669"/>
    <property type="project" value="UniProtKB-UniRule"/>
</dbReference>
<dbReference type="GO" id="GO:0016887">
    <property type="term" value="F:ATP hydrolysis activity"/>
    <property type="evidence" value="ECO:0007669"/>
    <property type="project" value="InterPro"/>
</dbReference>
<dbReference type="GO" id="GO:0046933">
    <property type="term" value="F:proton-transporting ATP synthase activity, rotational mechanism"/>
    <property type="evidence" value="ECO:0007669"/>
    <property type="project" value="UniProtKB-UniRule"/>
</dbReference>
<dbReference type="CDD" id="cd18110">
    <property type="entry name" value="ATP-synt_F1_beta_C"/>
    <property type="match status" value="1"/>
</dbReference>
<dbReference type="CDD" id="cd18115">
    <property type="entry name" value="ATP-synt_F1_beta_N"/>
    <property type="match status" value="1"/>
</dbReference>
<dbReference type="CDD" id="cd01133">
    <property type="entry name" value="F1-ATPase_beta_CD"/>
    <property type="match status" value="1"/>
</dbReference>
<dbReference type="FunFam" id="1.10.1140.10:FF:000001">
    <property type="entry name" value="ATP synthase subunit beta"/>
    <property type="match status" value="1"/>
</dbReference>
<dbReference type="FunFam" id="2.40.10.170:FF:000003">
    <property type="entry name" value="ATP synthase subunit beta"/>
    <property type="match status" value="1"/>
</dbReference>
<dbReference type="FunFam" id="3.40.50.300:FF:000004">
    <property type="entry name" value="ATP synthase subunit beta"/>
    <property type="match status" value="1"/>
</dbReference>
<dbReference type="Gene3D" id="2.40.10.170">
    <property type="match status" value="1"/>
</dbReference>
<dbReference type="Gene3D" id="1.10.1140.10">
    <property type="entry name" value="Bovine Mitochondrial F1-atpase, Atp Synthase Beta Chain, Chain D, domain 3"/>
    <property type="match status" value="1"/>
</dbReference>
<dbReference type="Gene3D" id="3.40.50.300">
    <property type="entry name" value="P-loop containing nucleotide triphosphate hydrolases"/>
    <property type="match status" value="1"/>
</dbReference>
<dbReference type="HAMAP" id="MF_01347">
    <property type="entry name" value="ATP_synth_beta_bact"/>
    <property type="match status" value="1"/>
</dbReference>
<dbReference type="InterPro" id="IPR003593">
    <property type="entry name" value="AAA+_ATPase"/>
</dbReference>
<dbReference type="InterPro" id="IPR055190">
    <property type="entry name" value="ATP-synt_VA_C"/>
</dbReference>
<dbReference type="InterPro" id="IPR005722">
    <property type="entry name" value="ATP_synth_F1_bsu"/>
</dbReference>
<dbReference type="InterPro" id="IPR020003">
    <property type="entry name" value="ATPase_a/bsu_AS"/>
</dbReference>
<dbReference type="InterPro" id="IPR050053">
    <property type="entry name" value="ATPase_alpha/beta_chains"/>
</dbReference>
<dbReference type="InterPro" id="IPR004100">
    <property type="entry name" value="ATPase_F1/V1/A1_a/bsu_N"/>
</dbReference>
<dbReference type="InterPro" id="IPR036121">
    <property type="entry name" value="ATPase_F1/V1/A1_a/bsu_N_sf"/>
</dbReference>
<dbReference type="InterPro" id="IPR000194">
    <property type="entry name" value="ATPase_F1/V1/A1_a/bsu_nucl-bd"/>
</dbReference>
<dbReference type="InterPro" id="IPR024034">
    <property type="entry name" value="ATPase_F1/V1_b/a_C"/>
</dbReference>
<dbReference type="InterPro" id="IPR027417">
    <property type="entry name" value="P-loop_NTPase"/>
</dbReference>
<dbReference type="NCBIfam" id="TIGR01039">
    <property type="entry name" value="atpD"/>
    <property type="match status" value="1"/>
</dbReference>
<dbReference type="PANTHER" id="PTHR15184">
    <property type="entry name" value="ATP SYNTHASE"/>
    <property type="match status" value="1"/>
</dbReference>
<dbReference type="PANTHER" id="PTHR15184:SF71">
    <property type="entry name" value="ATP SYNTHASE SUBUNIT BETA, MITOCHONDRIAL"/>
    <property type="match status" value="1"/>
</dbReference>
<dbReference type="Pfam" id="PF00006">
    <property type="entry name" value="ATP-synt_ab"/>
    <property type="match status" value="1"/>
</dbReference>
<dbReference type="Pfam" id="PF02874">
    <property type="entry name" value="ATP-synt_ab_N"/>
    <property type="match status" value="1"/>
</dbReference>
<dbReference type="Pfam" id="PF22919">
    <property type="entry name" value="ATP-synt_VA_C"/>
    <property type="match status" value="1"/>
</dbReference>
<dbReference type="SMART" id="SM00382">
    <property type="entry name" value="AAA"/>
    <property type="match status" value="1"/>
</dbReference>
<dbReference type="SUPFAM" id="SSF47917">
    <property type="entry name" value="C-terminal domain of alpha and beta subunits of F1 ATP synthase"/>
    <property type="match status" value="1"/>
</dbReference>
<dbReference type="SUPFAM" id="SSF50615">
    <property type="entry name" value="N-terminal domain of alpha and beta subunits of F1 ATP synthase"/>
    <property type="match status" value="1"/>
</dbReference>
<dbReference type="SUPFAM" id="SSF52540">
    <property type="entry name" value="P-loop containing nucleoside triphosphate hydrolases"/>
    <property type="match status" value="1"/>
</dbReference>
<dbReference type="PROSITE" id="PS00152">
    <property type="entry name" value="ATPASE_ALPHA_BETA"/>
    <property type="match status" value="1"/>
</dbReference>
<sequence>MSTGTVVQVIGAVVDVEFPQDAVPQIYDALKITGEGACKGLVLEVQQQLGGGVVRTIAMGSSDGLRRGLEVVNTGSPISVPVGVATLGRIMNVLGEPIDECGEIGEEERYVIHRSAPSYEDQSSSTELLETGIKVIDLVCPFAKGGKVGLFGGAGVGKTVNMMELINNIAKAHSGLSVFAGVGERTREGNDFYYEMKDSGVLDKVAMVYGQMNEPPGNRLRVALSGLTMAEKFRDEGRDVLLFVDNIYRYTLAGTEVSALLGRMPSAVGYQPTLAEEMGVLQERITSTKSGSITSVQAVYVPADDLTDPSPATTFAHLDATVVLSRQIASLGIYPAVDPLDSTSRQLDPQVVGQEHYDVANGVQTVLQRYKELKDIIAILGMDELSDEDKTAVARARKIERFLSQPFHVAEVFTGSPGKYVSLKDTIRGFKGLLEGEFDHIPEQAFYMVGTIDEAVEKANKKK</sequence>
<name>ATPB_SHEDO</name>
<gene>
    <name evidence="1" type="primary">atpD</name>
    <name type="ordered locus">Sden_3752</name>
</gene>
<comment type="function">
    <text evidence="1">Produces ATP from ADP in the presence of a proton gradient across the membrane. The catalytic sites are hosted primarily by the beta subunits.</text>
</comment>
<comment type="catalytic activity">
    <reaction evidence="1">
        <text>ATP + H2O + 4 H(+)(in) = ADP + phosphate + 5 H(+)(out)</text>
        <dbReference type="Rhea" id="RHEA:57720"/>
        <dbReference type="ChEBI" id="CHEBI:15377"/>
        <dbReference type="ChEBI" id="CHEBI:15378"/>
        <dbReference type="ChEBI" id="CHEBI:30616"/>
        <dbReference type="ChEBI" id="CHEBI:43474"/>
        <dbReference type="ChEBI" id="CHEBI:456216"/>
        <dbReference type="EC" id="7.1.2.2"/>
    </reaction>
</comment>
<comment type="subunit">
    <text evidence="1">F-type ATPases have 2 components, CF(1) - the catalytic core - and CF(0) - the membrane proton channel. CF(1) has five subunits: alpha(3), beta(3), gamma(1), delta(1), epsilon(1). CF(0) has three main subunits: a(1), b(2) and c(9-12). The alpha and beta chains form an alternating ring which encloses part of the gamma chain. CF(1) is attached to CF(0) by a central stalk formed by the gamma and epsilon chains, while a peripheral stalk is formed by the delta and b chains.</text>
</comment>
<comment type="subcellular location">
    <subcellularLocation>
        <location evidence="1">Cell inner membrane</location>
        <topology evidence="1">Peripheral membrane protein</topology>
    </subcellularLocation>
</comment>
<comment type="similarity">
    <text evidence="1">Belongs to the ATPase alpha/beta chains family.</text>
</comment>
<accession>Q12HQ1</accession>